<reference key="1">
    <citation type="journal article" date="2007" name="J. Bacteriol.">
        <title>The complete genome sequence of the lactic acid bacterial paradigm Lactococcus lactis subsp. cremoris MG1363.</title>
        <authorList>
            <person name="Wegmann U."/>
            <person name="O'Connell-Motherway M."/>
            <person name="Zomer A."/>
            <person name="Buist G."/>
            <person name="Shearman C."/>
            <person name="Canchaya C."/>
            <person name="Ventura M."/>
            <person name="Goesmann A."/>
            <person name="Gasson M.J."/>
            <person name="Kuipers O.P."/>
            <person name="van Sinderen D."/>
            <person name="Kok J."/>
        </authorList>
    </citation>
    <scope>NUCLEOTIDE SEQUENCE [LARGE SCALE GENOMIC DNA]</scope>
    <source>
        <strain>MG1363</strain>
    </source>
</reference>
<evidence type="ECO:0000255" key="1">
    <source>
        <dbReference type="HAMAP-Rule" id="MF_00245"/>
    </source>
</evidence>
<accession>A2RK52</accession>
<proteinExistence type="inferred from homology"/>
<gene>
    <name type="ordered locus">llmg_1069</name>
</gene>
<comment type="function">
    <text evidence="1">Might take part in the signal recognition particle (SRP) pathway. This is inferred from the conservation of its genetic proximity to ftsY/ffh. May be a regulatory protein.</text>
</comment>
<comment type="similarity">
    <text evidence="1">Belongs to the UPF0122 family.</text>
</comment>
<name>Y1069_LACLM</name>
<feature type="chain" id="PRO_1000012530" description="UPF0122 protein llmg_1069">
    <location>
        <begin position="1"/>
        <end position="111"/>
    </location>
</feature>
<protein>
    <recommendedName>
        <fullName evidence="1">UPF0122 protein llmg_1069</fullName>
    </recommendedName>
</protein>
<sequence>MEIEKTNRMNTLFEFYATLLTDKQMNYIELYYADDYSLAEIAEEFNISRQAVYDNIKRTEKVLESYEEKLHLFSNYVVRNQLLEELMKKYPSDQYLISKLQEIQQIDEEEF</sequence>
<dbReference type="EMBL" id="AM406671">
    <property type="protein sequence ID" value="CAL97662.1"/>
    <property type="molecule type" value="Genomic_DNA"/>
</dbReference>
<dbReference type="RefSeq" id="WP_011676389.1">
    <property type="nucleotide sequence ID" value="NC_009004.1"/>
</dbReference>
<dbReference type="SMR" id="A2RK52"/>
<dbReference type="STRING" id="416870.llmg_1069"/>
<dbReference type="KEGG" id="llm:llmg_1069"/>
<dbReference type="eggNOG" id="COG2739">
    <property type="taxonomic scope" value="Bacteria"/>
</dbReference>
<dbReference type="HOGENOM" id="CLU_129218_1_0_9"/>
<dbReference type="OrthoDB" id="6392at2"/>
<dbReference type="PhylomeDB" id="A2RK52"/>
<dbReference type="Proteomes" id="UP000000364">
    <property type="component" value="Chromosome"/>
</dbReference>
<dbReference type="Gene3D" id="1.10.10.10">
    <property type="entry name" value="Winged helix-like DNA-binding domain superfamily/Winged helix DNA-binding domain"/>
    <property type="match status" value="1"/>
</dbReference>
<dbReference type="HAMAP" id="MF_00245">
    <property type="entry name" value="UPF0122"/>
    <property type="match status" value="1"/>
</dbReference>
<dbReference type="InterPro" id="IPR013324">
    <property type="entry name" value="RNA_pol_sigma_r3/r4-like"/>
</dbReference>
<dbReference type="InterPro" id="IPR007394">
    <property type="entry name" value="UPF0122"/>
</dbReference>
<dbReference type="InterPro" id="IPR054831">
    <property type="entry name" value="UPF0122_fam_protein"/>
</dbReference>
<dbReference type="InterPro" id="IPR036388">
    <property type="entry name" value="WH-like_DNA-bd_sf"/>
</dbReference>
<dbReference type="NCBIfam" id="NF001066">
    <property type="entry name" value="PRK00118.1-1"/>
    <property type="match status" value="1"/>
</dbReference>
<dbReference type="NCBIfam" id="NF001068">
    <property type="entry name" value="PRK00118.1-4"/>
    <property type="match status" value="1"/>
</dbReference>
<dbReference type="NCBIfam" id="NF001070">
    <property type="entry name" value="PRK00118.1-6"/>
    <property type="match status" value="1"/>
</dbReference>
<dbReference type="NCBIfam" id="NF045758">
    <property type="entry name" value="YlxM"/>
    <property type="match status" value="1"/>
</dbReference>
<dbReference type="PANTHER" id="PTHR40083">
    <property type="entry name" value="UPF0122 PROTEIN CBO2450/CLC_2298"/>
    <property type="match status" value="1"/>
</dbReference>
<dbReference type="PANTHER" id="PTHR40083:SF1">
    <property type="entry name" value="UPF0122 PROTEIN YLXM"/>
    <property type="match status" value="1"/>
</dbReference>
<dbReference type="Pfam" id="PF04297">
    <property type="entry name" value="UPF0122"/>
    <property type="match status" value="1"/>
</dbReference>
<dbReference type="SUPFAM" id="SSF88659">
    <property type="entry name" value="Sigma3 and sigma4 domains of RNA polymerase sigma factors"/>
    <property type="match status" value="1"/>
</dbReference>
<organism>
    <name type="scientific">Lactococcus lactis subsp. cremoris (strain MG1363)</name>
    <dbReference type="NCBI Taxonomy" id="416870"/>
    <lineage>
        <taxon>Bacteria</taxon>
        <taxon>Bacillati</taxon>
        <taxon>Bacillota</taxon>
        <taxon>Bacilli</taxon>
        <taxon>Lactobacillales</taxon>
        <taxon>Streptococcaceae</taxon>
        <taxon>Lactococcus</taxon>
        <taxon>Lactococcus cremoris subsp. cremoris</taxon>
    </lineage>
</organism>